<reference key="1">
    <citation type="journal article" date="2008" name="J. Bacteriol.">
        <title>Complete genome sequence of Neisseria gonorrhoeae NCCP11945.</title>
        <authorList>
            <person name="Chung G.T."/>
            <person name="Yoo J.S."/>
            <person name="Oh H.B."/>
            <person name="Lee Y.S."/>
            <person name="Cha S.H."/>
            <person name="Kim S.J."/>
            <person name="Yoo C.K."/>
        </authorList>
    </citation>
    <scope>NUCLEOTIDE SEQUENCE [LARGE SCALE GENOMIC DNA]</scope>
    <source>
        <strain>NCCP11945</strain>
    </source>
</reference>
<dbReference type="EC" id="7.1.1.-" evidence="1"/>
<dbReference type="EMBL" id="CP001050">
    <property type="protein sequence ID" value="ACF30758.1"/>
    <property type="molecule type" value="Genomic_DNA"/>
</dbReference>
<dbReference type="RefSeq" id="WP_003689951.1">
    <property type="nucleotide sequence ID" value="NC_011035.1"/>
</dbReference>
<dbReference type="SMR" id="B4RPI1"/>
<dbReference type="GeneID" id="66754037"/>
<dbReference type="KEGG" id="ngk:NGK_2150"/>
<dbReference type="HOGENOM" id="CLU_015134_1_1_4"/>
<dbReference type="Proteomes" id="UP000002564">
    <property type="component" value="Chromosome"/>
</dbReference>
<dbReference type="GO" id="GO:0005886">
    <property type="term" value="C:plasma membrane"/>
    <property type="evidence" value="ECO:0007669"/>
    <property type="project" value="UniProtKB-SubCell"/>
</dbReference>
<dbReference type="GO" id="GO:0051287">
    <property type="term" value="F:NAD binding"/>
    <property type="evidence" value="ECO:0007669"/>
    <property type="project" value="InterPro"/>
</dbReference>
<dbReference type="GO" id="GO:0050136">
    <property type="term" value="F:NADH:ubiquinone reductase (non-electrogenic) activity"/>
    <property type="evidence" value="ECO:0007669"/>
    <property type="project" value="UniProtKB-UniRule"/>
</dbReference>
<dbReference type="GO" id="GO:0048038">
    <property type="term" value="F:quinone binding"/>
    <property type="evidence" value="ECO:0007669"/>
    <property type="project" value="UniProtKB-KW"/>
</dbReference>
<dbReference type="FunFam" id="1.10.645.10:FF:000005">
    <property type="entry name" value="NADH-quinone oxidoreductase subunit D"/>
    <property type="match status" value="1"/>
</dbReference>
<dbReference type="Gene3D" id="1.10.645.10">
    <property type="entry name" value="Cytochrome-c3 Hydrogenase, chain B"/>
    <property type="match status" value="1"/>
</dbReference>
<dbReference type="HAMAP" id="MF_01358">
    <property type="entry name" value="NDH1_NuoD"/>
    <property type="match status" value="1"/>
</dbReference>
<dbReference type="InterPro" id="IPR001135">
    <property type="entry name" value="NADH_Q_OxRdtase_suD"/>
</dbReference>
<dbReference type="InterPro" id="IPR014029">
    <property type="entry name" value="NADH_UbQ_OxRdtase_49kDa_CS"/>
</dbReference>
<dbReference type="InterPro" id="IPR022885">
    <property type="entry name" value="NDH1_su_D/H"/>
</dbReference>
<dbReference type="InterPro" id="IPR029014">
    <property type="entry name" value="NiFe-Hase_large"/>
</dbReference>
<dbReference type="NCBIfam" id="TIGR01962">
    <property type="entry name" value="NuoD"/>
    <property type="match status" value="1"/>
</dbReference>
<dbReference type="NCBIfam" id="NF004739">
    <property type="entry name" value="PRK06075.1"/>
    <property type="match status" value="1"/>
</dbReference>
<dbReference type="PANTHER" id="PTHR11993:SF10">
    <property type="entry name" value="NADH DEHYDROGENASE [UBIQUINONE] IRON-SULFUR PROTEIN 2, MITOCHONDRIAL"/>
    <property type="match status" value="1"/>
</dbReference>
<dbReference type="PANTHER" id="PTHR11993">
    <property type="entry name" value="NADH-UBIQUINONE OXIDOREDUCTASE 49 KDA SUBUNIT"/>
    <property type="match status" value="1"/>
</dbReference>
<dbReference type="Pfam" id="PF00346">
    <property type="entry name" value="Complex1_49kDa"/>
    <property type="match status" value="1"/>
</dbReference>
<dbReference type="SUPFAM" id="SSF56762">
    <property type="entry name" value="HydB/Nqo4-like"/>
    <property type="match status" value="1"/>
</dbReference>
<dbReference type="PROSITE" id="PS00535">
    <property type="entry name" value="COMPLEX1_49K"/>
    <property type="match status" value="1"/>
</dbReference>
<proteinExistence type="inferred from homology"/>
<comment type="function">
    <text evidence="1">NDH-1 shuttles electrons from NADH, via FMN and iron-sulfur (Fe-S) centers, to quinones in the respiratory chain. The immediate electron acceptor for the enzyme in this species is believed to be ubiquinone. Couples the redox reaction to proton translocation (for every two electrons transferred, four hydrogen ions are translocated across the cytoplasmic membrane), and thus conserves the redox energy in a proton gradient.</text>
</comment>
<comment type="catalytic activity">
    <reaction evidence="1">
        <text>a quinone + NADH + 5 H(+)(in) = a quinol + NAD(+) + 4 H(+)(out)</text>
        <dbReference type="Rhea" id="RHEA:57888"/>
        <dbReference type="ChEBI" id="CHEBI:15378"/>
        <dbReference type="ChEBI" id="CHEBI:24646"/>
        <dbReference type="ChEBI" id="CHEBI:57540"/>
        <dbReference type="ChEBI" id="CHEBI:57945"/>
        <dbReference type="ChEBI" id="CHEBI:132124"/>
    </reaction>
</comment>
<comment type="subunit">
    <text evidence="1">NDH-1 is composed of 14 different subunits. Subunits NuoB, C, D, E, F, and G constitute the peripheral sector of the complex.</text>
</comment>
<comment type="subcellular location">
    <subcellularLocation>
        <location evidence="1">Cell inner membrane</location>
        <topology evidence="1">Peripheral membrane protein</topology>
        <orientation evidence="1">Cytoplasmic side</orientation>
    </subcellularLocation>
</comment>
<comment type="similarity">
    <text evidence="1">Belongs to the complex I 49 kDa subunit family.</text>
</comment>
<gene>
    <name evidence="1" type="primary">nuoD</name>
    <name type="ordered locus">NGK_2150</name>
</gene>
<accession>B4RPI1</accession>
<organism>
    <name type="scientific">Neisseria gonorrhoeae (strain NCCP11945)</name>
    <dbReference type="NCBI Taxonomy" id="521006"/>
    <lineage>
        <taxon>Bacteria</taxon>
        <taxon>Pseudomonadati</taxon>
        <taxon>Pseudomonadota</taxon>
        <taxon>Betaproteobacteria</taxon>
        <taxon>Neisseriales</taxon>
        <taxon>Neisseriaceae</taxon>
        <taxon>Neisseria</taxon>
    </lineage>
</organism>
<sequence length="418" mass="47594">MANKLRNYTINFGPQHPAAHGVLRMILELDGEQIVRADPHIGLLHRGTEKLAETKTYLQALPYMDRLDYVSMMVNEQAYCLAVEKLAGIDVPIRAQYIRVMFAEVTRILNHLMGIGSHAFDIGAMTAILYAFRDREELMDLYEAVSGARMHAAYFRPGGVYRDLPGFMPKYESSKFRNAKVLKQLNESREGTMLDFIDAFCERFPKNIDTLETLLTDNRIWKQRTVGIGVVSPERAMQKGFTGVMLRGSGVEWDVRKTQPYEVYDKMDFDIPVGVNGDCYDRYLCRMEEMRQSVRIIKQCADWLRVNPGPVITANHKFAPPKRTEMKTGMEDLIHHFKLFTEGMHVPEGETYTAVEHPKGEFGVYIISDGANKPYRLKIRAPGFAHLQGMDEMAKGHMLADVVAIIGTQDIVFGEVDR</sequence>
<feature type="chain" id="PRO_0000357866" description="NADH-quinone oxidoreductase subunit D">
    <location>
        <begin position="1"/>
        <end position="418"/>
    </location>
</feature>
<name>NUOD_NEIG2</name>
<evidence type="ECO:0000255" key="1">
    <source>
        <dbReference type="HAMAP-Rule" id="MF_01358"/>
    </source>
</evidence>
<keyword id="KW-0997">Cell inner membrane</keyword>
<keyword id="KW-1003">Cell membrane</keyword>
<keyword id="KW-0472">Membrane</keyword>
<keyword id="KW-0520">NAD</keyword>
<keyword id="KW-0874">Quinone</keyword>
<keyword id="KW-1278">Translocase</keyword>
<keyword id="KW-0813">Transport</keyword>
<keyword id="KW-0830">Ubiquinone</keyword>
<protein>
    <recommendedName>
        <fullName evidence="1">NADH-quinone oxidoreductase subunit D</fullName>
        <ecNumber evidence="1">7.1.1.-</ecNumber>
    </recommendedName>
    <alternativeName>
        <fullName evidence="1">NADH dehydrogenase I subunit D</fullName>
    </alternativeName>
    <alternativeName>
        <fullName evidence="1">NDH-1 subunit D</fullName>
    </alternativeName>
</protein>